<sequence length="146" mass="16356">MKNEMHLEFSALSQNESFARVTVASFIAQLDPTMDELTEIKTVVSEAVTNAIIHGYEENCEGKVYISVTLEDHVVYMTIRDEGLGITDLEEARQPLFTTKPELERSGMGFTIMENFMDDVSIDSSPEMGTTIRLTKHLSKSKALCN</sequence>
<organism>
    <name type="scientific">Bacillus subtilis (strain 168)</name>
    <dbReference type="NCBI Taxonomy" id="224308"/>
    <lineage>
        <taxon>Bacteria</taxon>
        <taxon>Bacillati</taxon>
        <taxon>Bacillota</taxon>
        <taxon>Bacilli</taxon>
        <taxon>Bacillales</taxon>
        <taxon>Bacillaceae</taxon>
        <taxon>Bacillus</taxon>
    </lineage>
</organism>
<gene>
    <name type="primary">spoIIAB</name>
    <name type="ordered locus">BSU23460</name>
</gene>
<protein>
    <recommendedName>
        <fullName>Anti-sigma F factor</fullName>
        <ecNumber>2.7.11.1</ecNumber>
    </recommendedName>
    <alternativeName>
        <fullName>Stage II sporulation protein AB</fullName>
    </alternativeName>
</protein>
<reference key="1">
    <citation type="journal article" date="1984" name="J. Gen. Microbiol.">
        <title>Nucleotide sequence of sporulation locus spoIIA in Bacillus subtilis.</title>
        <authorList>
            <person name="Fort P."/>
            <person name="Piggot P.J."/>
        </authorList>
    </citation>
    <scope>NUCLEOTIDE SEQUENCE [GENOMIC DNA]</scope>
</reference>
<reference key="2">
    <citation type="journal article" date="1996" name="Microbiology">
        <title>Systematic sequencing of the 283 kb 210 degrees-232 degrees region of the Bacillus subtilis genome containing the skin element and many sporulation genes.</title>
        <authorList>
            <person name="Mizuno M."/>
            <person name="Masuda S."/>
            <person name="Takemaru K."/>
            <person name="Hosono S."/>
            <person name="Sato T."/>
            <person name="Takeuchi M."/>
            <person name="Kobayashi Y."/>
        </authorList>
    </citation>
    <scope>NUCLEOTIDE SEQUENCE [GENOMIC DNA]</scope>
    <source>
        <strain>168 / JH642</strain>
    </source>
</reference>
<reference key="3">
    <citation type="journal article" date="1997" name="Nature">
        <title>The complete genome sequence of the Gram-positive bacterium Bacillus subtilis.</title>
        <authorList>
            <person name="Kunst F."/>
            <person name="Ogasawara N."/>
            <person name="Moszer I."/>
            <person name="Albertini A.M."/>
            <person name="Alloni G."/>
            <person name="Azevedo V."/>
            <person name="Bertero M.G."/>
            <person name="Bessieres P."/>
            <person name="Bolotin A."/>
            <person name="Borchert S."/>
            <person name="Borriss R."/>
            <person name="Boursier L."/>
            <person name="Brans A."/>
            <person name="Braun M."/>
            <person name="Brignell S.C."/>
            <person name="Bron S."/>
            <person name="Brouillet S."/>
            <person name="Bruschi C.V."/>
            <person name="Caldwell B."/>
            <person name="Capuano V."/>
            <person name="Carter N.M."/>
            <person name="Choi S.-K."/>
            <person name="Codani J.-J."/>
            <person name="Connerton I.F."/>
            <person name="Cummings N.J."/>
            <person name="Daniel R.A."/>
            <person name="Denizot F."/>
            <person name="Devine K.M."/>
            <person name="Duesterhoeft A."/>
            <person name="Ehrlich S.D."/>
            <person name="Emmerson P.T."/>
            <person name="Entian K.-D."/>
            <person name="Errington J."/>
            <person name="Fabret C."/>
            <person name="Ferrari E."/>
            <person name="Foulger D."/>
            <person name="Fritz C."/>
            <person name="Fujita M."/>
            <person name="Fujita Y."/>
            <person name="Fuma S."/>
            <person name="Galizzi A."/>
            <person name="Galleron N."/>
            <person name="Ghim S.-Y."/>
            <person name="Glaser P."/>
            <person name="Goffeau A."/>
            <person name="Golightly E.J."/>
            <person name="Grandi G."/>
            <person name="Guiseppi G."/>
            <person name="Guy B.J."/>
            <person name="Haga K."/>
            <person name="Haiech J."/>
            <person name="Harwood C.R."/>
            <person name="Henaut A."/>
            <person name="Hilbert H."/>
            <person name="Holsappel S."/>
            <person name="Hosono S."/>
            <person name="Hullo M.-F."/>
            <person name="Itaya M."/>
            <person name="Jones L.-M."/>
            <person name="Joris B."/>
            <person name="Karamata D."/>
            <person name="Kasahara Y."/>
            <person name="Klaerr-Blanchard M."/>
            <person name="Klein C."/>
            <person name="Kobayashi Y."/>
            <person name="Koetter P."/>
            <person name="Koningstein G."/>
            <person name="Krogh S."/>
            <person name="Kumano M."/>
            <person name="Kurita K."/>
            <person name="Lapidus A."/>
            <person name="Lardinois S."/>
            <person name="Lauber J."/>
            <person name="Lazarevic V."/>
            <person name="Lee S.-M."/>
            <person name="Levine A."/>
            <person name="Liu H."/>
            <person name="Masuda S."/>
            <person name="Mauel C."/>
            <person name="Medigue C."/>
            <person name="Medina N."/>
            <person name="Mellado R.P."/>
            <person name="Mizuno M."/>
            <person name="Moestl D."/>
            <person name="Nakai S."/>
            <person name="Noback M."/>
            <person name="Noone D."/>
            <person name="O'Reilly M."/>
            <person name="Ogawa K."/>
            <person name="Ogiwara A."/>
            <person name="Oudega B."/>
            <person name="Park S.-H."/>
            <person name="Parro V."/>
            <person name="Pohl T.M."/>
            <person name="Portetelle D."/>
            <person name="Porwollik S."/>
            <person name="Prescott A.M."/>
            <person name="Presecan E."/>
            <person name="Pujic P."/>
            <person name="Purnelle B."/>
            <person name="Rapoport G."/>
            <person name="Rey M."/>
            <person name="Reynolds S."/>
            <person name="Rieger M."/>
            <person name="Rivolta C."/>
            <person name="Rocha E."/>
            <person name="Roche B."/>
            <person name="Rose M."/>
            <person name="Sadaie Y."/>
            <person name="Sato T."/>
            <person name="Scanlan E."/>
            <person name="Schleich S."/>
            <person name="Schroeter R."/>
            <person name="Scoffone F."/>
            <person name="Sekiguchi J."/>
            <person name="Sekowska A."/>
            <person name="Seror S.J."/>
            <person name="Serror P."/>
            <person name="Shin B.-S."/>
            <person name="Soldo B."/>
            <person name="Sorokin A."/>
            <person name="Tacconi E."/>
            <person name="Takagi T."/>
            <person name="Takahashi H."/>
            <person name="Takemaru K."/>
            <person name="Takeuchi M."/>
            <person name="Tamakoshi A."/>
            <person name="Tanaka T."/>
            <person name="Terpstra P."/>
            <person name="Tognoni A."/>
            <person name="Tosato V."/>
            <person name="Uchiyama S."/>
            <person name="Vandenbol M."/>
            <person name="Vannier F."/>
            <person name="Vassarotti A."/>
            <person name="Viari A."/>
            <person name="Wambutt R."/>
            <person name="Wedler E."/>
            <person name="Wedler H."/>
            <person name="Weitzenegger T."/>
            <person name="Winters P."/>
            <person name="Wipat A."/>
            <person name="Yamamoto H."/>
            <person name="Yamane K."/>
            <person name="Yasumoto K."/>
            <person name="Yata K."/>
            <person name="Yoshida K."/>
            <person name="Yoshikawa H.-F."/>
            <person name="Zumstein E."/>
            <person name="Yoshikawa H."/>
            <person name="Danchin A."/>
        </authorList>
    </citation>
    <scope>NUCLEOTIDE SEQUENCE [LARGE SCALE GENOMIC DNA]</scope>
    <source>
        <strain>168</strain>
    </source>
</reference>
<reference key="4">
    <citation type="journal article" date="1993" name="Proc. Natl. Acad. Sci. U.S.A.">
        <title>SpoIIAB is an anti-sigma factor that binds to and inhibits transcription by regulatory protein sigma F from Bacillus subtilis.</title>
        <authorList>
            <person name="Duncan L."/>
            <person name="Losick R."/>
        </authorList>
    </citation>
    <scope>FUNCTION</scope>
</reference>
<reference key="5">
    <citation type="journal article" date="1993" name="Cell">
        <title>Sigma F, the first compartment-specific transcription factor of B. subtilis, is regulated by an anti-sigma factor that is also a protein kinase.</title>
        <authorList>
            <person name="Min K.-T."/>
            <person name="Hilditch C.M."/>
            <person name="Diederich B."/>
            <person name="Errington J."/>
            <person name="Yudkin M.D."/>
        </authorList>
    </citation>
    <scope>FUNCTION</scope>
    <scope>PROTEIN SEQUENCE OF 1-14</scope>
    <source>
        <strain>CU267</strain>
    </source>
</reference>
<keyword id="KW-0067">ATP-binding</keyword>
<keyword id="KW-0903">Direct protein sequencing</keyword>
<keyword id="KW-0418">Kinase</keyword>
<keyword id="KW-0547">Nucleotide-binding</keyword>
<keyword id="KW-1185">Reference proteome</keyword>
<keyword id="KW-0723">Serine/threonine-protein kinase</keyword>
<keyword id="KW-0749">Sporulation</keyword>
<keyword id="KW-0808">Transferase</keyword>
<dbReference type="EC" id="2.7.11.1"/>
<dbReference type="EMBL" id="M17643">
    <property type="protein sequence ID" value="AAA22790.1"/>
    <property type="molecule type" value="Genomic_DNA"/>
</dbReference>
<dbReference type="EMBL" id="D84432">
    <property type="protein sequence ID" value="BAA12654.1"/>
    <property type="molecule type" value="Genomic_DNA"/>
</dbReference>
<dbReference type="EMBL" id="AL009126">
    <property type="protein sequence ID" value="CAB14278.1"/>
    <property type="molecule type" value="Genomic_DNA"/>
</dbReference>
<dbReference type="PIR" id="B55646">
    <property type="entry name" value="B55646"/>
</dbReference>
<dbReference type="RefSeq" id="NP_390227.1">
    <property type="nucleotide sequence ID" value="NC_000964.3"/>
</dbReference>
<dbReference type="RefSeq" id="WP_003230452.1">
    <property type="nucleotide sequence ID" value="NZ_OZ025638.1"/>
</dbReference>
<dbReference type="SMR" id="P10728"/>
<dbReference type="FunCoup" id="P10728">
    <property type="interactions" value="321"/>
</dbReference>
<dbReference type="IntAct" id="P10728">
    <property type="interactions" value="5"/>
</dbReference>
<dbReference type="STRING" id="224308.BSU23460"/>
<dbReference type="PaxDb" id="224308-BSU23460"/>
<dbReference type="EnsemblBacteria" id="CAB14278">
    <property type="protein sequence ID" value="CAB14278"/>
    <property type="gene ID" value="BSU_23460"/>
</dbReference>
<dbReference type="GeneID" id="938930"/>
<dbReference type="KEGG" id="bsu:BSU23460"/>
<dbReference type="PATRIC" id="fig|224308.179.peg.2556"/>
<dbReference type="eggNOG" id="COG2172">
    <property type="taxonomic scope" value="Bacteria"/>
</dbReference>
<dbReference type="InParanoid" id="P10728"/>
<dbReference type="OrthoDB" id="9768808at2"/>
<dbReference type="PhylomeDB" id="P10728"/>
<dbReference type="BioCyc" id="BSUB:BSU23460-MONOMER"/>
<dbReference type="SABIO-RK" id="P10728"/>
<dbReference type="Proteomes" id="UP000001570">
    <property type="component" value="Chromosome"/>
</dbReference>
<dbReference type="GO" id="GO:0005524">
    <property type="term" value="F:ATP binding"/>
    <property type="evidence" value="ECO:0007669"/>
    <property type="project" value="UniProtKB-KW"/>
</dbReference>
<dbReference type="GO" id="GO:0106310">
    <property type="term" value="F:protein serine kinase activity"/>
    <property type="evidence" value="ECO:0007669"/>
    <property type="project" value="RHEA"/>
</dbReference>
<dbReference type="GO" id="GO:0004674">
    <property type="term" value="F:protein serine/threonine kinase activity"/>
    <property type="evidence" value="ECO:0007669"/>
    <property type="project" value="UniProtKB-KW"/>
</dbReference>
<dbReference type="GO" id="GO:0016989">
    <property type="term" value="F:sigma factor antagonist activity"/>
    <property type="evidence" value="ECO:0000318"/>
    <property type="project" value="GO_Central"/>
</dbReference>
<dbReference type="GO" id="GO:0030436">
    <property type="term" value="P:asexual sporulation"/>
    <property type="evidence" value="ECO:0007669"/>
    <property type="project" value="UniProtKB-UniRule"/>
</dbReference>
<dbReference type="GO" id="GO:0045892">
    <property type="term" value="P:negative regulation of DNA-templated transcription"/>
    <property type="evidence" value="ECO:0000318"/>
    <property type="project" value="GO_Central"/>
</dbReference>
<dbReference type="GO" id="GO:0042174">
    <property type="term" value="P:negative regulation of sporulation resulting in formation of a cellular spore"/>
    <property type="evidence" value="ECO:0007669"/>
    <property type="project" value="InterPro"/>
</dbReference>
<dbReference type="GO" id="GO:0030435">
    <property type="term" value="P:sporulation resulting in formation of a cellular spore"/>
    <property type="evidence" value="ECO:0007669"/>
    <property type="project" value="UniProtKB-KW"/>
</dbReference>
<dbReference type="Gene3D" id="3.30.565.10">
    <property type="entry name" value="Histidine kinase-like ATPase, C-terminal domain"/>
    <property type="match status" value="1"/>
</dbReference>
<dbReference type="HAMAP" id="MF_00637">
    <property type="entry name" value="Anti_sigma_F"/>
    <property type="match status" value="1"/>
</dbReference>
<dbReference type="InterPro" id="IPR050267">
    <property type="entry name" value="Anti-sigma-factor_SerPK"/>
</dbReference>
<dbReference type="InterPro" id="IPR010194">
    <property type="entry name" value="Anti-sigma_F"/>
</dbReference>
<dbReference type="InterPro" id="IPR036890">
    <property type="entry name" value="HATPase_C_sf"/>
</dbReference>
<dbReference type="NCBIfam" id="TIGR01925">
    <property type="entry name" value="spIIAB"/>
    <property type="match status" value="1"/>
</dbReference>
<dbReference type="PANTHER" id="PTHR35526:SF3">
    <property type="entry name" value="ANTI-SIGMA-F FACTOR RSBW"/>
    <property type="match status" value="1"/>
</dbReference>
<dbReference type="PANTHER" id="PTHR35526">
    <property type="entry name" value="ANTI-SIGMA-F FACTOR RSBW-RELATED"/>
    <property type="match status" value="1"/>
</dbReference>
<dbReference type="Pfam" id="PF13581">
    <property type="entry name" value="HATPase_c_2"/>
    <property type="match status" value="1"/>
</dbReference>
<dbReference type="SMART" id="SM00387">
    <property type="entry name" value="HATPase_c"/>
    <property type="match status" value="1"/>
</dbReference>
<dbReference type="SUPFAM" id="SSF55874">
    <property type="entry name" value="ATPase domain of HSP90 chaperone/DNA topoisomerase II/histidine kinase"/>
    <property type="match status" value="1"/>
</dbReference>
<comment type="function">
    <text evidence="1 2">Binds to sigma F and blocks its ability to form an RNA polymerase holoenzyme (E-sigma F). Phosphorylates SpoIIAA on a serine residue. This phosphorylation may enable SpoIIAA to act as an anti-anti-sigma factor that counteracts SpoIIAB and thus releases sigma F from inhibition.</text>
</comment>
<comment type="catalytic activity">
    <reaction>
        <text>L-seryl-[protein] + ATP = O-phospho-L-seryl-[protein] + ADP + H(+)</text>
        <dbReference type="Rhea" id="RHEA:17989"/>
        <dbReference type="Rhea" id="RHEA-COMP:9863"/>
        <dbReference type="Rhea" id="RHEA-COMP:11604"/>
        <dbReference type="ChEBI" id="CHEBI:15378"/>
        <dbReference type="ChEBI" id="CHEBI:29999"/>
        <dbReference type="ChEBI" id="CHEBI:30616"/>
        <dbReference type="ChEBI" id="CHEBI:83421"/>
        <dbReference type="ChEBI" id="CHEBI:456216"/>
        <dbReference type="EC" id="2.7.11.1"/>
    </reaction>
</comment>
<comment type="catalytic activity">
    <reaction>
        <text>L-threonyl-[protein] + ATP = O-phospho-L-threonyl-[protein] + ADP + H(+)</text>
        <dbReference type="Rhea" id="RHEA:46608"/>
        <dbReference type="Rhea" id="RHEA-COMP:11060"/>
        <dbReference type="Rhea" id="RHEA-COMP:11605"/>
        <dbReference type="ChEBI" id="CHEBI:15378"/>
        <dbReference type="ChEBI" id="CHEBI:30013"/>
        <dbReference type="ChEBI" id="CHEBI:30616"/>
        <dbReference type="ChEBI" id="CHEBI:61977"/>
        <dbReference type="ChEBI" id="CHEBI:456216"/>
        <dbReference type="EC" id="2.7.11.1"/>
    </reaction>
</comment>
<comment type="interaction">
    <interactant intactId="EBI-9344705">
        <id>P10728</id>
    </interactant>
    <interactant intactId="EBI-5255200">
        <id>O31435</id>
        <label>ybdM</label>
    </interactant>
    <organismsDiffer>false</organismsDiffer>
    <experiments>2</experiments>
</comment>
<comment type="developmental stage">
    <text>Interaction with SpoIIAB inhibits sigma F activity throughout the cell before the formation of the asymmetric septum; after septation the interaction is confined to the mother cell, and sigma F activity is released in the prespore.</text>
</comment>
<comment type="similarity">
    <text evidence="3">Belongs to the anti-sigma-factor family.</text>
</comment>
<evidence type="ECO:0000269" key="1">
    <source>
    </source>
</evidence>
<evidence type="ECO:0000269" key="2">
    <source>
    </source>
</evidence>
<evidence type="ECO:0000305" key="3"/>
<proteinExistence type="evidence at protein level"/>
<name>SP2AB_BACSU</name>
<feature type="chain" id="PRO_0000203561" description="Anti-sigma F factor">
    <location>
        <begin position="1"/>
        <end position="146"/>
    </location>
</feature>
<accession>P10728</accession>